<organismHost>
    <name type="scientific">Antilocapra americana</name>
    <name type="common">Pronghorn</name>
    <dbReference type="NCBI Taxonomy" id="9891"/>
</organismHost>
<organismHost>
    <name type="scientific">Bos taurus</name>
    <name type="common">Bovine</name>
    <dbReference type="NCBI Taxonomy" id="9913"/>
</organismHost>
<organismHost>
    <name type="scientific">Capra hircus</name>
    <name type="common">Goat</name>
    <dbReference type="NCBI Taxonomy" id="9925"/>
</organismHost>
<organismHost>
    <name type="scientific">Culicoides variipennis</name>
    <name type="common">Biting midge</name>
    <dbReference type="NCBI Taxonomy" id="46212"/>
</organismHost>
<organismHost>
    <name type="scientific">Ovis aries</name>
    <name type="common">Sheep</name>
    <dbReference type="NCBI Taxonomy" id="9940"/>
</organismHost>
<feature type="chain" id="PRO_0000222731" description="Core protein VP7">
    <location>
        <begin position="1"/>
        <end position="349"/>
    </location>
</feature>
<feature type="glycosylation site" description="N-linked (GlcNAc...) asparagine; by host" evidence="1">
    <location>
        <position position="287"/>
    </location>
</feature>
<gene>
    <name type="primary">Segment-7</name>
</gene>
<comment type="function">
    <text>The VP7 protein is one of the five proteins (with VP1, VP3, VP4, and VP6) which form the inner capsid of the virus.</text>
</comment>
<comment type="subunit">
    <text>Homotrimer that assemble in a complex of 260 capsomers on an inner scaffold composed of VP3.</text>
</comment>
<comment type="subcellular location">
    <subcellularLocation>
        <location evidence="2">Virion</location>
    </subcellularLocation>
</comment>
<comment type="similarity">
    <text evidence="2">Belongs to the orbivirus VP7 family.</text>
</comment>
<protein>
    <recommendedName>
        <fullName>Core protein VP7</fullName>
    </recommendedName>
</protein>
<sequence length="349" mass="38518">MDTIAARALTVMRACATLQEARIVLEANVMEILGIAINRYNGLTLRGVTMRPTSLAQRNEMFFMCLDMMLSAAGINVGPISPDYTQHMATIGVLATPEIPFTTEAANEIARVTGETSTWGPARQPYGFFLETEETFQPGRWFMRAAQAVAAVVCGPDMIQVSLNAGARGDVQQIFQGRNDPMMIYLVWRRIENFAMAQGNSQQTQAGVTVSVGGVDMRAGRIIAWDGQAALHVHNPTQQNAMVQIQVVFYISMDKTLNQYPALTAEIFNVYSFRDHTWHGLRTAILNRTTLPNMLPPIFPPNDRDSILTLLLLSTLADVYTVLRPEFAIHGVNPMPGPLTRAIARAAYV</sequence>
<name>VP7_BTV2A</name>
<proteinExistence type="inferred from homology"/>
<accession>P26561</accession>
<keyword id="KW-0167">Capsid protein</keyword>
<keyword id="KW-0325">Glycoprotein</keyword>
<keyword id="KW-1152">Outer capsid protein</keyword>
<keyword id="KW-0946">Virion</keyword>
<organism>
    <name type="scientific">Bluetongue virus 2 (isolate USA)</name>
    <name type="common">BTV 2</name>
    <dbReference type="NCBI Taxonomy" id="10907"/>
    <lineage>
        <taxon>Viruses</taxon>
        <taxon>Riboviria</taxon>
        <taxon>Orthornavirae</taxon>
        <taxon>Duplornaviricota</taxon>
        <taxon>Resentoviricetes</taxon>
        <taxon>Reovirales</taxon>
        <taxon>Sedoreoviridae</taxon>
        <taxon>Orbivirus</taxon>
        <taxon>Bluetongue virus</taxon>
    </lineage>
</organism>
<evidence type="ECO:0000255" key="1"/>
<evidence type="ECO:0000305" key="2"/>
<reference key="1">
    <citation type="journal article" date="1991" name="Virology">
        <title>Bluetongue virus evolution: sequence analyses of the genomic S1 segments and major core protein VP7.</title>
        <authorList>
            <person name="Kowalik T.F."/>
            <person name="Li J.K.-K."/>
        </authorList>
    </citation>
    <scope>NUCLEOTIDE SEQUENCE [GENOMIC RNA]</scope>
</reference>
<dbReference type="EMBL" id="M64997">
    <property type="protein sequence ID" value="AAA42852.1"/>
    <property type="molecule type" value="Genomic_RNA"/>
</dbReference>
<dbReference type="PIR" id="A37950">
    <property type="entry name" value="P7XRB2"/>
</dbReference>
<dbReference type="SMR" id="P26561"/>
<dbReference type="GlyCosmos" id="P26561">
    <property type="glycosylation" value="1 site, No reported glycans"/>
</dbReference>
<dbReference type="GO" id="GO:0019031">
    <property type="term" value="C:viral envelope"/>
    <property type="evidence" value="ECO:0007669"/>
    <property type="project" value="InterPro"/>
</dbReference>
<dbReference type="GO" id="GO:0039624">
    <property type="term" value="C:viral outer capsid"/>
    <property type="evidence" value="ECO:0007669"/>
    <property type="project" value="UniProtKB-KW"/>
</dbReference>
<dbReference type="GO" id="GO:0046789">
    <property type="term" value="F:host cell surface receptor binding"/>
    <property type="evidence" value="ECO:0007669"/>
    <property type="project" value="InterPro"/>
</dbReference>
<dbReference type="GO" id="GO:0005198">
    <property type="term" value="F:structural molecule activity"/>
    <property type="evidence" value="ECO:0007669"/>
    <property type="project" value="InterPro"/>
</dbReference>
<dbReference type="GO" id="GO:0019064">
    <property type="term" value="P:fusion of virus membrane with host plasma membrane"/>
    <property type="evidence" value="ECO:0007669"/>
    <property type="project" value="InterPro"/>
</dbReference>
<dbReference type="Gene3D" id="2.60.120.170">
    <property type="match status" value="1"/>
</dbReference>
<dbReference type="Gene3D" id="1.10.250.10">
    <property type="entry name" value="Bluetongue Virus 10, subunit 1, domain 1"/>
    <property type="match status" value="1"/>
</dbReference>
<dbReference type="Gene3D" id="1.10.170.10">
    <property type="entry name" value="Bluetongue Virus 10, subunit 1, domain 3"/>
    <property type="match status" value="1"/>
</dbReference>
<dbReference type="InterPro" id="IPR008980">
    <property type="entry name" value="Capsid_hemagglutn"/>
</dbReference>
<dbReference type="InterPro" id="IPR001803">
    <property type="entry name" value="Orbi_VP7_capsid"/>
</dbReference>
<dbReference type="InterPro" id="IPR023178">
    <property type="entry name" value="Orbi_VP7_capsid_C"/>
</dbReference>
<dbReference type="InterPro" id="IPR023176">
    <property type="entry name" value="Orbi_VP7_capsid_N"/>
</dbReference>
<dbReference type="InterPro" id="IPR008935">
    <property type="entry name" value="Virus_capsid_a-hlx_vir"/>
</dbReference>
<dbReference type="Pfam" id="PF00897">
    <property type="entry name" value="Orbi_VP7"/>
    <property type="match status" value="1"/>
</dbReference>
<dbReference type="PRINTS" id="PR00903">
    <property type="entry name" value="VP7CAPSID"/>
</dbReference>
<dbReference type="SUPFAM" id="SSF48345">
    <property type="entry name" value="A virus capsid protein alpha-helical domain"/>
    <property type="match status" value="1"/>
</dbReference>
<dbReference type="SUPFAM" id="SSF49818">
    <property type="entry name" value="Viral protein domain"/>
    <property type="match status" value="1"/>
</dbReference>